<proteinExistence type="inferred from homology"/>
<protein>
    <recommendedName>
        <fullName evidence="1">Peptide chain release factor 3</fullName>
        <shortName evidence="1">RF-3</shortName>
    </recommendedName>
</protein>
<organism>
    <name type="scientific">Escherichia coli O17:K52:H18 (strain UMN026 / ExPEC)</name>
    <dbReference type="NCBI Taxonomy" id="585056"/>
    <lineage>
        <taxon>Bacteria</taxon>
        <taxon>Pseudomonadati</taxon>
        <taxon>Pseudomonadota</taxon>
        <taxon>Gammaproteobacteria</taxon>
        <taxon>Enterobacterales</taxon>
        <taxon>Enterobacteriaceae</taxon>
        <taxon>Escherichia</taxon>
    </lineage>
</organism>
<dbReference type="EMBL" id="CU928163">
    <property type="protein sequence ID" value="CAR16107.1"/>
    <property type="molecule type" value="Genomic_DNA"/>
</dbReference>
<dbReference type="RefSeq" id="WP_000175940.1">
    <property type="nucleotide sequence ID" value="NC_011751.1"/>
</dbReference>
<dbReference type="RefSeq" id="YP_002415571.1">
    <property type="nucleotide sequence ID" value="NC_011751.1"/>
</dbReference>
<dbReference type="SMR" id="B7NH42"/>
<dbReference type="STRING" id="585056.ECUMN_4998"/>
<dbReference type="KEGG" id="eum:ECUMN_4998"/>
<dbReference type="PATRIC" id="fig|585056.7.peg.5161"/>
<dbReference type="HOGENOM" id="CLU_002794_2_1_6"/>
<dbReference type="Proteomes" id="UP000007097">
    <property type="component" value="Chromosome"/>
</dbReference>
<dbReference type="GO" id="GO:0005829">
    <property type="term" value="C:cytosol"/>
    <property type="evidence" value="ECO:0007669"/>
    <property type="project" value="TreeGrafter"/>
</dbReference>
<dbReference type="GO" id="GO:0005525">
    <property type="term" value="F:GTP binding"/>
    <property type="evidence" value="ECO:0007669"/>
    <property type="project" value="UniProtKB-UniRule"/>
</dbReference>
<dbReference type="GO" id="GO:0003924">
    <property type="term" value="F:GTPase activity"/>
    <property type="evidence" value="ECO:0007669"/>
    <property type="project" value="InterPro"/>
</dbReference>
<dbReference type="GO" id="GO:0097216">
    <property type="term" value="F:guanosine tetraphosphate binding"/>
    <property type="evidence" value="ECO:0007669"/>
    <property type="project" value="UniProtKB-ARBA"/>
</dbReference>
<dbReference type="GO" id="GO:0016150">
    <property type="term" value="F:translation release factor activity, codon nonspecific"/>
    <property type="evidence" value="ECO:0007669"/>
    <property type="project" value="TreeGrafter"/>
</dbReference>
<dbReference type="GO" id="GO:0016149">
    <property type="term" value="F:translation release factor activity, codon specific"/>
    <property type="evidence" value="ECO:0007669"/>
    <property type="project" value="UniProtKB-UniRule"/>
</dbReference>
<dbReference type="GO" id="GO:0006449">
    <property type="term" value="P:regulation of translational termination"/>
    <property type="evidence" value="ECO:0007669"/>
    <property type="project" value="UniProtKB-UniRule"/>
</dbReference>
<dbReference type="CDD" id="cd04169">
    <property type="entry name" value="RF3"/>
    <property type="match status" value="1"/>
</dbReference>
<dbReference type="CDD" id="cd03689">
    <property type="entry name" value="RF3_II"/>
    <property type="match status" value="1"/>
</dbReference>
<dbReference type="CDD" id="cd16259">
    <property type="entry name" value="RF3_III"/>
    <property type="match status" value="1"/>
</dbReference>
<dbReference type="FunFam" id="2.40.30.10:FF:000040">
    <property type="entry name" value="Peptide chain release factor 3"/>
    <property type="match status" value="1"/>
</dbReference>
<dbReference type="FunFam" id="3.30.70.3280:FF:000001">
    <property type="entry name" value="Peptide chain release factor 3"/>
    <property type="match status" value="1"/>
</dbReference>
<dbReference type="FunFam" id="3.40.50.300:FF:000184">
    <property type="entry name" value="Peptide chain release factor 3"/>
    <property type="match status" value="1"/>
</dbReference>
<dbReference type="FunFam" id="3.40.50.300:FF:000253">
    <property type="entry name" value="Peptide chain release factor 3"/>
    <property type="match status" value="1"/>
</dbReference>
<dbReference type="Gene3D" id="3.40.50.300">
    <property type="entry name" value="P-loop containing nucleotide triphosphate hydrolases"/>
    <property type="match status" value="3"/>
</dbReference>
<dbReference type="Gene3D" id="3.30.70.3280">
    <property type="entry name" value="Peptide chain release factor 3, domain III"/>
    <property type="match status" value="1"/>
</dbReference>
<dbReference type="HAMAP" id="MF_00072">
    <property type="entry name" value="Rel_fac_3"/>
    <property type="match status" value="1"/>
</dbReference>
<dbReference type="InterPro" id="IPR053905">
    <property type="entry name" value="EF-G-like_DII"/>
</dbReference>
<dbReference type="InterPro" id="IPR035647">
    <property type="entry name" value="EFG_III/V"/>
</dbReference>
<dbReference type="InterPro" id="IPR031157">
    <property type="entry name" value="G_TR_CS"/>
</dbReference>
<dbReference type="InterPro" id="IPR027417">
    <property type="entry name" value="P-loop_NTPase"/>
</dbReference>
<dbReference type="InterPro" id="IPR004548">
    <property type="entry name" value="PrfC"/>
</dbReference>
<dbReference type="InterPro" id="IPR032090">
    <property type="entry name" value="RF3_C"/>
</dbReference>
<dbReference type="InterPro" id="IPR038467">
    <property type="entry name" value="RF3_dom_3_sf"/>
</dbReference>
<dbReference type="InterPro" id="IPR041732">
    <property type="entry name" value="RF3_GTP-bd"/>
</dbReference>
<dbReference type="InterPro" id="IPR005225">
    <property type="entry name" value="Small_GTP-bd"/>
</dbReference>
<dbReference type="InterPro" id="IPR000795">
    <property type="entry name" value="T_Tr_GTP-bd_dom"/>
</dbReference>
<dbReference type="InterPro" id="IPR009000">
    <property type="entry name" value="Transl_B-barrel_sf"/>
</dbReference>
<dbReference type="NCBIfam" id="TIGR00503">
    <property type="entry name" value="prfC"/>
    <property type="match status" value="1"/>
</dbReference>
<dbReference type="NCBIfam" id="NF001964">
    <property type="entry name" value="PRK00741.1"/>
    <property type="match status" value="1"/>
</dbReference>
<dbReference type="NCBIfam" id="TIGR00231">
    <property type="entry name" value="small_GTP"/>
    <property type="match status" value="1"/>
</dbReference>
<dbReference type="PANTHER" id="PTHR43556">
    <property type="entry name" value="PEPTIDE CHAIN RELEASE FACTOR RF3"/>
    <property type="match status" value="1"/>
</dbReference>
<dbReference type="PANTHER" id="PTHR43556:SF2">
    <property type="entry name" value="PEPTIDE CHAIN RELEASE FACTOR RF3"/>
    <property type="match status" value="1"/>
</dbReference>
<dbReference type="Pfam" id="PF22042">
    <property type="entry name" value="EF-G_D2"/>
    <property type="match status" value="1"/>
</dbReference>
<dbReference type="Pfam" id="PF00009">
    <property type="entry name" value="GTP_EFTU"/>
    <property type="match status" value="1"/>
</dbReference>
<dbReference type="Pfam" id="PF16658">
    <property type="entry name" value="RF3_C"/>
    <property type="match status" value="1"/>
</dbReference>
<dbReference type="PRINTS" id="PR00315">
    <property type="entry name" value="ELONGATNFCT"/>
</dbReference>
<dbReference type="SUPFAM" id="SSF54980">
    <property type="entry name" value="EF-G C-terminal domain-like"/>
    <property type="match status" value="1"/>
</dbReference>
<dbReference type="SUPFAM" id="SSF52540">
    <property type="entry name" value="P-loop containing nucleoside triphosphate hydrolases"/>
    <property type="match status" value="1"/>
</dbReference>
<dbReference type="SUPFAM" id="SSF50447">
    <property type="entry name" value="Translation proteins"/>
    <property type="match status" value="1"/>
</dbReference>
<dbReference type="PROSITE" id="PS00301">
    <property type="entry name" value="G_TR_1"/>
    <property type="match status" value="1"/>
</dbReference>
<dbReference type="PROSITE" id="PS51722">
    <property type="entry name" value="G_TR_2"/>
    <property type="match status" value="1"/>
</dbReference>
<comment type="function">
    <text evidence="1">Increases the formation of ribosomal termination complexes and stimulates activities of RF-1 and RF-2. It binds guanine nucleotides and has strong preference for UGA stop codons. It may interact directly with the ribosome. The stimulation of RF-1 and RF-2 is significantly reduced by GTP and GDP, but not by GMP.</text>
</comment>
<comment type="subcellular location">
    <subcellularLocation>
        <location evidence="1">Cytoplasm</location>
    </subcellularLocation>
</comment>
<comment type="similarity">
    <text evidence="1">Belongs to the TRAFAC class translation factor GTPase superfamily. Classic translation factor GTPase family. PrfC subfamily.</text>
</comment>
<reference key="1">
    <citation type="journal article" date="2009" name="PLoS Genet.">
        <title>Organised genome dynamics in the Escherichia coli species results in highly diverse adaptive paths.</title>
        <authorList>
            <person name="Touchon M."/>
            <person name="Hoede C."/>
            <person name="Tenaillon O."/>
            <person name="Barbe V."/>
            <person name="Baeriswyl S."/>
            <person name="Bidet P."/>
            <person name="Bingen E."/>
            <person name="Bonacorsi S."/>
            <person name="Bouchier C."/>
            <person name="Bouvet O."/>
            <person name="Calteau A."/>
            <person name="Chiapello H."/>
            <person name="Clermont O."/>
            <person name="Cruveiller S."/>
            <person name="Danchin A."/>
            <person name="Diard M."/>
            <person name="Dossat C."/>
            <person name="Karoui M.E."/>
            <person name="Frapy E."/>
            <person name="Garry L."/>
            <person name="Ghigo J.M."/>
            <person name="Gilles A.M."/>
            <person name="Johnson J."/>
            <person name="Le Bouguenec C."/>
            <person name="Lescat M."/>
            <person name="Mangenot S."/>
            <person name="Martinez-Jehanne V."/>
            <person name="Matic I."/>
            <person name="Nassif X."/>
            <person name="Oztas S."/>
            <person name="Petit M.A."/>
            <person name="Pichon C."/>
            <person name="Rouy Z."/>
            <person name="Ruf C.S."/>
            <person name="Schneider D."/>
            <person name="Tourret J."/>
            <person name="Vacherie B."/>
            <person name="Vallenet D."/>
            <person name="Medigue C."/>
            <person name="Rocha E.P.C."/>
            <person name="Denamur E."/>
        </authorList>
    </citation>
    <scope>NUCLEOTIDE SEQUENCE [LARGE SCALE GENOMIC DNA]</scope>
    <source>
        <strain>UMN026 / ExPEC</strain>
    </source>
</reference>
<gene>
    <name evidence="1" type="primary">prfC</name>
    <name type="ordered locus">ECUMN_4998</name>
</gene>
<feature type="chain" id="PRO_1000193525" description="Peptide chain release factor 3">
    <location>
        <begin position="1"/>
        <end position="529"/>
    </location>
</feature>
<feature type="domain" description="tr-type G">
    <location>
        <begin position="11"/>
        <end position="280"/>
    </location>
</feature>
<feature type="binding site" evidence="1">
    <location>
        <begin position="20"/>
        <end position="27"/>
    </location>
    <ligand>
        <name>GTP</name>
        <dbReference type="ChEBI" id="CHEBI:37565"/>
    </ligand>
</feature>
<feature type="binding site" evidence="1">
    <location>
        <begin position="88"/>
        <end position="92"/>
    </location>
    <ligand>
        <name>GTP</name>
        <dbReference type="ChEBI" id="CHEBI:37565"/>
    </ligand>
</feature>
<feature type="binding site" evidence="1">
    <location>
        <begin position="142"/>
        <end position="145"/>
    </location>
    <ligand>
        <name>GTP</name>
        <dbReference type="ChEBI" id="CHEBI:37565"/>
    </ligand>
</feature>
<name>RF3_ECOLU</name>
<keyword id="KW-0963">Cytoplasm</keyword>
<keyword id="KW-0342">GTP-binding</keyword>
<keyword id="KW-0547">Nucleotide-binding</keyword>
<keyword id="KW-0648">Protein biosynthesis</keyword>
<accession>B7NH42</accession>
<sequence length="529" mass="59574">MTLSPYLQEVAKRRTFAIISHPDAGKTTITEKVLLFGQAIQTAGTVKGRGSNQHAKSDWMEMEKQRGISITTSVMQFPYHDCLVNLLDTPGHEDFSEDTYRTLTAVDCCLMVIDAAKGVEDRTRKLMEVTRLRDTPILTFMNKLDRDIRDPMELLDEVENELKIGCAPITWPIGCGKLFKGVYHLYKDETYLYQSGKGHTIQEVRIVKGLNNPDLDAAVGEDLAQQLRDELELVKGASNEFDKELFLAGEITPVFFGTALGNFGVDHMLDGLVEWAPAPMPRQTDTRTVEASEDKFTGFVFKIQANMDPKHRDRVAFMRVVSGKYEKGMKLRQVRTAKDVVISDALTFMAGDRSHVEEAYPGDILGLHNHGTIQIGDTFTQGEMMKFTGIPNFAPELFRRIRLKDPLKQKQLLKGLVQLSEEGAVQVFRPISNNDLIVGAVGVLQFDVVVARLKSEYNVEAVYESVNVATARWVECADAKKFEEFKRKNESQLALDGGDNLAYIATSMVNLRLAQERYPDVQFHQTREH</sequence>
<evidence type="ECO:0000255" key="1">
    <source>
        <dbReference type="HAMAP-Rule" id="MF_00072"/>
    </source>
</evidence>